<evidence type="ECO:0000250" key="1">
    <source>
        <dbReference type="UniProtKB" id="P00396"/>
    </source>
</evidence>
<evidence type="ECO:0000250" key="2">
    <source>
        <dbReference type="UniProtKB" id="P00401"/>
    </source>
</evidence>
<evidence type="ECO:0000255" key="3"/>
<evidence type="ECO:0000305" key="4"/>
<gene>
    <name type="primary">COI</name>
</gene>
<organism>
    <name type="scientific">Paramecium tetraurelia</name>
    <dbReference type="NCBI Taxonomy" id="5888"/>
    <lineage>
        <taxon>Eukaryota</taxon>
        <taxon>Sar</taxon>
        <taxon>Alveolata</taxon>
        <taxon>Ciliophora</taxon>
        <taxon>Intramacronucleata</taxon>
        <taxon>Oligohymenophorea</taxon>
        <taxon>Peniculida</taxon>
        <taxon>Parameciidae</taxon>
        <taxon>Paramecium</taxon>
    </lineage>
</organism>
<name>COX1_PARTE</name>
<dbReference type="EC" id="7.1.1.9"/>
<dbReference type="EMBL" id="X15917">
    <property type="protein sequence ID" value="CAA34030.1"/>
    <property type="molecule type" value="Genomic_DNA"/>
</dbReference>
<dbReference type="EMBL" id="M15281">
    <property type="protein sequence ID" value="AAA79251.1"/>
    <property type="molecule type" value="Genomic_DNA"/>
</dbReference>
<dbReference type="PIR" id="A24988">
    <property type="entry name" value="ODPP1"/>
</dbReference>
<dbReference type="PIR" id="S07751">
    <property type="entry name" value="S07751"/>
</dbReference>
<dbReference type="SMR" id="P05489"/>
<dbReference type="UniPathway" id="UPA00705"/>
<dbReference type="GO" id="GO:0005743">
    <property type="term" value="C:mitochondrial inner membrane"/>
    <property type="evidence" value="ECO:0007669"/>
    <property type="project" value="UniProtKB-SubCell"/>
</dbReference>
<dbReference type="GO" id="GO:0004129">
    <property type="term" value="F:cytochrome-c oxidase activity"/>
    <property type="evidence" value="ECO:0007669"/>
    <property type="project" value="UniProtKB-EC"/>
</dbReference>
<dbReference type="GO" id="GO:0020037">
    <property type="term" value="F:heme binding"/>
    <property type="evidence" value="ECO:0007669"/>
    <property type="project" value="InterPro"/>
</dbReference>
<dbReference type="GO" id="GO:0046872">
    <property type="term" value="F:metal ion binding"/>
    <property type="evidence" value="ECO:0007669"/>
    <property type="project" value="UniProtKB-KW"/>
</dbReference>
<dbReference type="GO" id="GO:0006119">
    <property type="term" value="P:oxidative phosphorylation"/>
    <property type="evidence" value="ECO:0007669"/>
    <property type="project" value="UniProtKB-UniPathway"/>
</dbReference>
<dbReference type="CDD" id="cd00919">
    <property type="entry name" value="Heme_Cu_Oxidase_I"/>
    <property type="match status" value="1"/>
</dbReference>
<dbReference type="Gene3D" id="1.20.210.10">
    <property type="entry name" value="Cytochrome c oxidase-like, subunit I domain"/>
    <property type="match status" value="2"/>
</dbReference>
<dbReference type="InterPro" id="IPR023616">
    <property type="entry name" value="Cyt_c_oxase-like_su1_dom"/>
</dbReference>
<dbReference type="InterPro" id="IPR036927">
    <property type="entry name" value="Cyt_c_oxase-like_su1_sf"/>
</dbReference>
<dbReference type="InterPro" id="IPR000883">
    <property type="entry name" value="Cyt_C_Oxase_1"/>
</dbReference>
<dbReference type="InterPro" id="IPR023615">
    <property type="entry name" value="Cyt_c_Oxase_su1_BS"/>
</dbReference>
<dbReference type="PANTHER" id="PTHR10422">
    <property type="entry name" value="CYTOCHROME C OXIDASE SUBUNIT 1"/>
    <property type="match status" value="1"/>
</dbReference>
<dbReference type="PANTHER" id="PTHR10422:SF18">
    <property type="entry name" value="CYTOCHROME C OXIDASE SUBUNIT 1"/>
    <property type="match status" value="1"/>
</dbReference>
<dbReference type="Pfam" id="PF00115">
    <property type="entry name" value="COX1"/>
    <property type="match status" value="2"/>
</dbReference>
<dbReference type="PRINTS" id="PR01165">
    <property type="entry name" value="CYCOXIDASEI"/>
</dbReference>
<dbReference type="SUPFAM" id="SSF81442">
    <property type="entry name" value="Cytochrome c oxidase subunit I-like"/>
    <property type="match status" value="1"/>
</dbReference>
<dbReference type="PROSITE" id="PS50855">
    <property type="entry name" value="COX1"/>
    <property type="match status" value="1"/>
</dbReference>
<dbReference type="PROSITE" id="PS00077">
    <property type="entry name" value="COX1_CUB"/>
    <property type="match status" value="1"/>
</dbReference>
<geneLocation type="mitochondrion"/>
<protein>
    <recommendedName>
        <fullName>Cytochrome c oxidase subunit 1</fullName>
        <ecNumber>7.1.1.9</ecNumber>
    </recommendedName>
    <alternativeName>
        <fullName>Cytochrome c oxidase polypeptide I</fullName>
    </alternativeName>
</protein>
<comment type="function">
    <text evidence="2">Component of the cytochrome c oxidase, the last enzyme in the mitochondrial electron transport chain which drives oxidative phosphorylation. The respiratory chain contains 3 multisubunit complexes succinate dehydrogenase (complex II, CII), ubiquinol-cytochrome c oxidoreductase (cytochrome b-c1 complex, complex III, CIII) and cytochrome c oxidase (complex IV, CIV), that cooperate to transfer electrons derived from NADH and succinate to molecular oxygen, creating an electrochemical gradient over the inner membrane that drives transmembrane transport and the ATP synthase. Cytochrome c oxidase is the component of the respiratory chain that catalyzes the reduction of oxygen to water. Electrons originating from reduced cytochrome c in the intermembrane space (IMS) are transferred via the dinuclear copper A center (CU(A)) of subunit 2 and heme A of subunit 1 to the active site in subunit 1, a binuclear center (BNC) formed by heme A3 and copper B (CU(B)). The BNC reduces molecular oxygen to 2 water molecules using 4 electrons from cytochrome c in the IMS and 4 protons from the mitochondrial matrix.</text>
</comment>
<comment type="catalytic activity">
    <reaction evidence="2">
        <text>4 Fe(II)-[cytochrome c] + O2 + 8 H(+)(in) = 4 Fe(III)-[cytochrome c] + 2 H2O + 4 H(+)(out)</text>
        <dbReference type="Rhea" id="RHEA:11436"/>
        <dbReference type="Rhea" id="RHEA-COMP:10350"/>
        <dbReference type="Rhea" id="RHEA-COMP:14399"/>
        <dbReference type="ChEBI" id="CHEBI:15377"/>
        <dbReference type="ChEBI" id="CHEBI:15378"/>
        <dbReference type="ChEBI" id="CHEBI:15379"/>
        <dbReference type="ChEBI" id="CHEBI:29033"/>
        <dbReference type="ChEBI" id="CHEBI:29034"/>
        <dbReference type="EC" id="7.1.1.9"/>
    </reaction>
    <physiologicalReaction direction="left-to-right" evidence="2">
        <dbReference type="Rhea" id="RHEA:11437"/>
    </physiologicalReaction>
</comment>
<comment type="cofactor">
    <cofactor evidence="2">
        <name>heme</name>
        <dbReference type="ChEBI" id="CHEBI:30413"/>
    </cofactor>
    <text evidence="2">Binds 2 heme A groups non-covalently per subunit.</text>
</comment>
<comment type="cofactor">
    <cofactor evidence="2">
        <name>Cu cation</name>
        <dbReference type="ChEBI" id="CHEBI:23378"/>
    </cofactor>
    <text evidence="2">Binds a copper B center.</text>
</comment>
<comment type="pathway">
    <text evidence="2">Energy metabolism; oxidative phosphorylation.</text>
</comment>
<comment type="subunit">
    <text evidence="2">Component of the cytochrome c oxidase (complex IV, CIV), a multisubunit enzyme composed of a catalytic core of 3 subunits and several supernumerary subunits. The complex exists as a monomer or a dimer and forms supercomplexes (SCs) in the inner mitochondrial membrane with ubiquinol-cytochrome c oxidoreductase (cytochrome b-c1 complex, complex III, CIII).</text>
</comment>
<comment type="subcellular location">
    <subcellularLocation>
        <location evidence="2">Mitochondrion inner membrane</location>
        <topology evidence="2">Multi-pass membrane protein</topology>
    </subcellularLocation>
</comment>
<comment type="similarity">
    <text evidence="4">Belongs to the heme-copper respiratory oxidase family.</text>
</comment>
<accession>P05489</accession>
<feature type="chain" id="PRO_0000183383" description="Cytochrome c oxidase subunit 1">
    <location>
        <begin position="1"/>
        <end position="645"/>
    </location>
</feature>
<feature type="transmembrane region" description="Helical" evidence="3">
    <location>
        <begin position="8"/>
        <end position="28"/>
    </location>
</feature>
<feature type="transmembrane region" description="Helical" evidence="3">
    <location>
        <begin position="56"/>
        <end position="76"/>
    </location>
</feature>
<feature type="transmembrane region" description="Helical" evidence="3">
    <location>
        <begin position="90"/>
        <end position="110"/>
    </location>
</feature>
<feature type="transmembrane region" description="Helical" evidence="3">
    <location>
        <begin position="247"/>
        <end position="267"/>
    </location>
</feature>
<feature type="transmembrane region" description="Helical" evidence="3">
    <location>
        <begin position="282"/>
        <end position="302"/>
    </location>
</feature>
<feature type="transmembrane region" description="Helical" evidence="3">
    <location>
        <begin position="337"/>
        <end position="357"/>
    </location>
</feature>
<feature type="transmembrane region" description="Helical" evidence="3">
    <location>
        <begin position="376"/>
        <end position="396"/>
    </location>
</feature>
<feature type="transmembrane region" description="Helical" evidence="3">
    <location>
        <begin position="410"/>
        <end position="430"/>
    </location>
</feature>
<feature type="transmembrane region" description="Helical" evidence="3">
    <location>
        <begin position="438"/>
        <end position="458"/>
    </location>
</feature>
<feature type="transmembrane region" description="Helical" evidence="3">
    <location>
        <begin position="475"/>
        <end position="495"/>
    </location>
</feature>
<feature type="transmembrane region" description="Helical" evidence="3">
    <location>
        <begin position="513"/>
        <end position="533"/>
    </location>
</feature>
<feature type="transmembrane region" description="Helical" evidence="3">
    <location>
        <begin position="555"/>
        <end position="575"/>
    </location>
</feature>
<feature type="binding site" evidence="2">
    <location>
        <position position="31"/>
    </location>
    <ligand>
        <name>Ca(2+)</name>
        <dbReference type="ChEBI" id="CHEBI:29108"/>
    </ligand>
</feature>
<feature type="binding site" evidence="2">
    <location>
        <position position="36"/>
    </location>
    <ligand>
        <name>Ca(2+)</name>
        <dbReference type="ChEBI" id="CHEBI:29108"/>
    </ligand>
</feature>
<feature type="binding site" description="axial binding residue" evidence="2">
    <location>
        <position position="54"/>
    </location>
    <ligand>
        <name>Fe(II)-heme a</name>
        <dbReference type="ChEBI" id="CHEBI:61715"/>
        <note>low-spin</note>
    </ligand>
    <ligandPart>
        <name>Fe</name>
        <dbReference type="ChEBI" id="CHEBI:18248"/>
    </ligandPart>
</feature>
<feature type="binding site" evidence="2">
    <location>
        <position position="343"/>
    </location>
    <ligand>
        <name>Cu cation</name>
        <dbReference type="ChEBI" id="CHEBI:23378"/>
        <label>B</label>
    </ligand>
</feature>
<feature type="binding site" evidence="1">
    <location>
        <position position="347"/>
    </location>
    <ligand>
        <name>O2</name>
        <dbReference type="ChEBI" id="CHEBI:15379"/>
    </ligand>
</feature>
<feature type="binding site" evidence="2">
    <location>
        <position position="392"/>
    </location>
    <ligand>
        <name>Cu cation</name>
        <dbReference type="ChEBI" id="CHEBI:23378"/>
        <label>B</label>
    </ligand>
</feature>
<feature type="binding site" evidence="2">
    <location>
        <position position="393"/>
    </location>
    <ligand>
        <name>Cu cation</name>
        <dbReference type="ChEBI" id="CHEBI:23378"/>
        <label>B</label>
    </ligand>
</feature>
<feature type="binding site" evidence="2">
    <location>
        <position position="470"/>
    </location>
    <ligand>
        <name>Mg(2+)</name>
        <dbReference type="ChEBI" id="CHEBI:18420"/>
        <note>ligand shared with subunit 2</note>
    </ligand>
</feature>
<feature type="binding site" evidence="2">
    <location>
        <position position="471"/>
    </location>
    <ligand>
        <name>Mg(2+)</name>
        <dbReference type="ChEBI" id="CHEBI:18420"/>
        <note>ligand shared with subunit 2</note>
    </ligand>
</feature>
<feature type="binding site" description="axial binding residue" evidence="2">
    <location>
        <position position="478"/>
    </location>
    <ligand>
        <name>heme a3</name>
        <dbReference type="ChEBI" id="CHEBI:83282"/>
        <note>high-spin</note>
    </ligand>
    <ligandPart>
        <name>Fe</name>
        <dbReference type="ChEBI" id="CHEBI:18248"/>
    </ligandPart>
</feature>
<feature type="binding site" description="axial binding residue" evidence="2">
    <location>
        <position position="480"/>
    </location>
    <ligand>
        <name>Fe(II)-heme a</name>
        <dbReference type="ChEBI" id="CHEBI:61715"/>
        <note>low-spin</note>
    </ligand>
    <ligandPart>
        <name>Fe</name>
        <dbReference type="ChEBI" id="CHEBI:18248"/>
    </ligandPart>
</feature>
<feature type="cross-link" description="1'-histidyl-3'-tyrosine (His-Tyr)" evidence="2">
    <location>
        <begin position="343"/>
        <end position="347"/>
    </location>
</feature>
<proteinExistence type="inferred from homology"/>
<keyword id="KW-0106">Calcium</keyword>
<keyword id="KW-0186">Copper</keyword>
<keyword id="KW-0249">Electron transport</keyword>
<keyword id="KW-0349">Heme</keyword>
<keyword id="KW-0408">Iron</keyword>
<keyword id="KW-0460">Magnesium</keyword>
<keyword id="KW-0472">Membrane</keyword>
<keyword id="KW-0479">Metal-binding</keyword>
<keyword id="KW-0496">Mitochondrion</keyword>
<keyword id="KW-0999">Mitochondrion inner membrane</keyword>
<keyword id="KW-0679">Respiratory chain</keyword>
<keyword id="KW-1278">Translocase</keyword>
<keyword id="KW-0812">Transmembrane</keyword>
<keyword id="KW-1133">Transmembrane helix</keyword>
<keyword id="KW-0813">Transport</keyword>
<sequence>MNHKRIALNYFYFSMWTGLSGAALATMIRLEMAYPGSPFFKGDSIKYLQVATAHGLIMVFFVVVPIFFGGFANFLIPYHVGSKDVAFPRLNSIGFWIQPLGFLLVAKIAFLRTTSWKYYDKTSFFLQPYNKSLYRDFFNFLTGELSFNPFKKSLDESLFLFLWKPRKKITNTEYTSFFFNPLNLSFLDSFFYYSDNLWSLANKVVSSRRKKIYVTKCSNRAAVTAGWTFITPFSSNMKYSGFGAQDVLSVAVVLAGISTTISLLTLITRRTLVAPGLRNRRVLIPFITISLLLTLRLLAIVTPILGAAVLMSLMDRHWQTSFFDFAYGGDPILFQHLFWFFGHPEVYILIIPSFGVANIVLPFYTMRRMSSKHHMIWAVYVMAYMGFVVWGHHMYLVGLDHRSRNIYSTITIMICLPATIKLVNWTLTLANAAIHVDLVFLFFCSYVFFFLTGGFTGMWLSHVGLNISVHDTFYVVAHFHLMLAGAAMMGAFTGLYYYYNTFFDVQYSKIFGFLHLVYYSAGIWTTFFPMFFLGFSGLPRRIHDFPAFFLGWHGLASCGHFLTLAGVCFFFFGIFDSTSENKSSILANFGIPKIAKRAHLYFFKISYNNYTNEIASELPKVEVRKFIIENTFGEYECVKLVPVTK</sequence>
<reference key="1">
    <citation type="journal article" date="1990" name="Nucleic Acids Res.">
        <title>Nucleotide sequence of the mitochondrial genome of Paramecium.</title>
        <authorList>
            <person name="Pritchard A.E."/>
            <person name="Seilhamer J.J."/>
            <person name="Mahalingam R."/>
            <person name="Sable C.L."/>
            <person name="Venuti S.E."/>
            <person name="Cummings D.J."/>
        </authorList>
    </citation>
    <scope>NUCLEOTIDE SEQUENCE [GENOMIC DNA]</scope>
    <source>
        <strain>Stock 51</strain>
    </source>
</reference>
<reference key="2">
    <citation type="journal article" date="1986" name="Gene">
        <title>Paramecium mitochondrial DNA sequences and RNA transcripts for cytochrome oxidase subunit I, URF1, and three ORFs adjacent to the replication origin.</title>
        <authorList>
            <person name="Pritchard A.E."/>
            <person name="Seilhamer J.J."/>
            <person name="Cummings D.J."/>
        </authorList>
    </citation>
    <scope>NUCLEOTIDE SEQUENCE [GENOMIC DNA]</scope>
</reference>